<keyword id="KW-0131">Cell cycle</keyword>
<keyword id="KW-0132">Cell division</keyword>
<keyword id="KW-0143">Chaperone</keyword>
<keyword id="KW-0963">Cytoplasm</keyword>
<keyword id="KW-0413">Isomerase</keyword>
<keyword id="KW-1185">Reference proteome</keyword>
<keyword id="KW-0697">Rotamase</keyword>
<protein>
    <recommendedName>
        <fullName evidence="1">Trigger factor</fullName>
        <shortName evidence="1">TF</shortName>
        <ecNumber evidence="1">5.2.1.8</ecNumber>
    </recommendedName>
    <alternativeName>
        <fullName evidence="1">PPIase</fullName>
    </alternativeName>
</protein>
<feature type="chain" id="PRO_1000022750" description="Trigger factor">
    <location>
        <begin position="1"/>
        <end position="467"/>
    </location>
</feature>
<feature type="domain" description="PPIase FKBP-type" evidence="1">
    <location>
        <begin position="162"/>
        <end position="243"/>
    </location>
</feature>
<feature type="region of interest" description="Disordered" evidence="2">
    <location>
        <begin position="426"/>
        <end position="467"/>
    </location>
</feature>
<feature type="compositionally biased region" description="Acidic residues" evidence="2">
    <location>
        <begin position="426"/>
        <end position="435"/>
    </location>
</feature>
<feature type="compositionally biased region" description="Low complexity" evidence="2">
    <location>
        <begin position="436"/>
        <end position="452"/>
    </location>
</feature>
<feature type="compositionally biased region" description="Basic and acidic residues" evidence="2">
    <location>
        <begin position="458"/>
        <end position="467"/>
    </location>
</feature>
<evidence type="ECO:0000255" key="1">
    <source>
        <dbReference type="HAMAP-Rule" id="MF_00303"/>
    </source>
</evidence>
<evidence type="ECO:0000256" key="2">
    <source>
        <dbReference type="SAM" id="MobiDB-lite"/>
    </source>
</evidence>
<organism>
    <name type="scientific">Saccharopolyspora erythraea (strain ATCC 11635 / DSM 40517 / JCM 4748 / NBRC 13426 / NCIMB 8594 / NRRL 2338)</name>
    <dbReference type="NCBI Taxonomy" id="405948"/>
    <lineage>
        <taxon>Bacteria</taxon>
        <taxon>Bacillati</taxon>
        <taxon>Actinomycetota</taxon>
        <taxon>Actinomycetes</taxon>
        <taxon>Pseudonocardiales</taxon>
        <taxon>Pseudonocardiaceae</taxon>
        <taxon>Saccharopolyspora</taxon>
    </lineage>
</organism>
<proteinExistence type="inferred from homology"/>
<dbReference type="EC" id="5.2.1.8" evidence="1"/>
<dbReference type="EMBL" id="AM420293">
    <property type="protein sequence ID" value="CAM00681.1"/>
    <property type="molecule type" value="Genomic_DNA"/>
</dbReference>
<dbReference type="RefSeq" id="WP_009950203.1">
    <property type="nucleotide sequence ID" value="NC_009142.1"/>
</dbReference>
<dbReference type="SMR" id="A4F9F6"/>
<dbReference type="STRING" id="405948.SACE_1359"/>
<dbReference type="KEGG" id="sen:SACE_1359"/>
<dbReference type="eggNOG" id="COG0544">
    <property type="taxonomic scope" value="Bacteria"/>
</dbReference>
<dbReference type="HOGENOM" id="CLU_033058_3_0_11"/>
<dbReference type="OrthoDB" id="9767721at2"/>
<dbReference type="Proteomes" id="UP000006728">
    <property type="component" value="Chromosome"/>
</dbReference>
<dbReference type="GO" id="GO:0005737">
    <property type="term" value="C:cytoplasm"/>
    <property type="evidence" value="ECO:0007669"/>
    <property type="project" value="UniProtKB-SubCell"/>
</dbReference>
<dbReference type="GO" id="GO:0003755">
    <property type="term" value="F:peptidyl-prolyl cis-trans isomerase activity"/>
    <property type="evidence" value="ECO:0007669"/>
    <property type="project" value="UniProtKB-UniRule"/>
</dbReference>
<dbReference type="GO" id="GO:0044183">
    <property type="term" value="F:protein folding chaperone"/>
    <property type="evidence" value="ECO:0007669"/>
    <property type="project" value="TreeGrafter"/>
</dbReference>
<dbReference type="GO" id="GO:0043022">
    <property type="term" value="F:ribosome binding"/>
    <property type="evidence" value="ECO:0007669"/>
    <property type="project" value="TreeGrafter"/>
</dbReference>
<dbReference type="GO" id="GO:0051083">
    <property type="term" value="P:'de novo' cotranslational protein folding"/>
    <property type="evidence" value="ECO:0007669"/>
    <property type="project" value="TreeGrafter"/>
</dbReference>
<dbReference type="GO" id="GO:0051301">
    <property type="term" value="P:cell division"/>
    <property type="evidence" value="ECO:0007669"/>
    <property type="project" value="UniProtKB-KW"/>
</dbReference>
<dbReference type="GO" id="GO:0061077">
    <property type="term" value="P:chaperone-mediated protein folding"/>
    <property type="evidence" value="ECO:0007669"/>
    <property type="project" value="TreeGrafter"/>
</dbReference>
<dbReference type="GO" id="GO:0015031">
    <property type="term" value="P:protein transport"/>
    <property type="evidence" value="ECO:0007669"/>
    <property type="project" value="UniProtKB-UniRule"/>
</dbReference>
<dbReference type="GO" id="GO:0043335">
    <property type="term" value="P:protein unfolding"/>
    <property type="evidence" value="ECO:0007669"/>
    <property type="project" value="TreeGrafter"/>
</dbReference>
<dbReference type="FunFam" id="3.10.50.40:FF:000019">
    <property type="entry name" value="Trigger factor"/>
    <property type="match status" value="1"/>
</dbReference>
<dbReference type="Gene3D" id="3.10.50.40">
    <property type="match status" value="1"/>
</dbReference>
<dbReference type="Gene3D" id="3.30.70.1050">
    <property type="entry name" value="Trigger factor ribosome-binding domain"/>
    <property type="match status" value="1"/>
</dbReference>
<dbReference type="Gene3D" id="1.10.3120.10">
    <property type="entry name" value="Trigger factor, C-terminal domain"/>
    <property type="match status" value="1"/>
</dbReference>
<dbReference type="HAMAP" id="MF_00303">
    <property type="entry name" value="Trigger_factor_Tig"/>
    <property type="match status" value="1"/>
</dbReference>
<dbReference type="InterPro" id="IPR046357">
    <property type="entry name" value="PPIase_dom_sf"/>
</dbReference>
<dbReference type="InterPro" id="IPR001179">
    <property type="entry name" value="PPIase_FKBP_dom"/>
</dbReference>
<dbReference type="InterPro" id="IPR005215">
    <property type="entry name" value="Trig_fac"/>
</dbReference>
<dbReference type="InterPro" id="IPR008880">
    <property type="entry name" value="Trigger_fac_C"/>
</dbReference>
<dbReference type="InterPro" id="IPR037041">
    <property type="entry name" value="Trigger_fac_C_sf"/>
</dbReference>
<dbReference type="InterPro" id="IPR008881">
    <property type="entry name" value="Trigger_fac_ribosome-bd_bac"/>
</dbReference>
<dbReference type="InterPro" id="IPR036611">
    <property type="entry name" value="Trigger_fac_ribosome-bd_sf"/>
</dbReference>
<dbReference type="InterPro" id="IPR027304">
    <property type="entry name" value="Trigger_fact/SurA_dom_sf"/>
</dbReference>
<dbReference type="NCBIfam" id="TIGR00115">
    <property type="entry name" value="tig"/>
    <property type="match status" value="1"/>
</dbReference>
<dbReference type="PANTHER" id="PTHR30560">
    <property type="entry name" value="TRIGGER FACTOR CHAPERONE AND PEPTIDYL-PROLYL CIS/TRANS ISOMERASE"/>
    <property type="match status" value="1"/>
</dbReference>
<dbReference type="PANTHER" id="PTHR30560:SF3">
    <property type="entry name" value="TRIGGER FACTOR-LIKE PROTEIN TIG, CHLOROPLASTIC"/>
    <property type="match status" value="1"/>
</dbReference>
<dbReference type="Pfam" id="PF00254">
    <property type="entry name" value="FKBP_C"/>
    <property type="match status" value="1"/>
</dbReference>
<dbReference type="Pfam" id="PF05698">
    <property type="entry name" value="Trigger_C"/>
    <property type="match status" value="1"/>
</dbReference>
<dbReference type="Pfam" id="PF05697">
    <property type="entry name" value="Trigger_N"/>
    <property type="match status" value="1"/>
</dbReference>
<dbReference type="PIRSF" id="PIRSF003095">
    <property type="entry name" value="Trigger_factor"/>
    <property type="match status" value="1"/>
</dbReference>
<dbReference type="SUPFAM" id="SSF54534">
    <property type="entry name" value="FKBP-like"/>
    <property type="match status" value="1"/>
</dbReference>
<dbReference type="SUPFAM" id="SSF109998">
    <property type="entry name" value="Triger factor/SurA peptide-binding domain-like"/>
    <property type="match status" value="1"/>
</dbReference>
<dbReference type="SUPFAM" id="SSF102735">
    <property type="entry name" value="Trigger factor ribosome-binding domain"/>
    <property type="match status" value="1"/>
</dbReference>
<dbReference type="PROSITE" id="PS50059">
    <property type="entry name" value="FKBP_PPIASE"/>
    <property type="match status" value="1"/>
</dbReference>
<name>TIG_SACEN</name>
<comment type="function">
    <text evidence="1">Involved in protein export. Acts as a chaperone by maintaining the newly synthesized protein in an open conformation. Functions as a peptidyl-prolyl cis-trans isomerase.</text>
</comment>
<comment type="catalytic activity">
    <reaction evidence="1">
        <text>[protein]-peptidylproline (omega=180) = [protein]-peptidylproline (omega=0)</text>
        <dbReference type="Rhea" id="RHEA:16237"/>
        <dbReference type="Rhea" id="RHEA-COMP:10747"/>
        <dbReference type="Rhea" id="RHEA-COMP:10748"/>
        <dbReference type="ChEBI" id="CHEBI:83833"/>
        <dbReference type="ChEBI" id="CHEBI:83834"/>
        <dbReference type="EC" id="5.2.1.8"/>
    </reaction>
</comment>
<comment type="subcellular location">
    <subcellularLocation>
        <location>Cytoplasm</location>
    </subcellularLocation>
    <text evidence="1">About half TF is bound to the ribosome near the polypeptide exit tunnel while the other half is free in the cytoplasm.</text>
</comment>
<comment type="domain">
    <text evidence="1">Consists of 3 domains; the N-terminus binds the ribosome, the middle domain has PPIase activity, while the C-terminus has intrinsic chaperone activity on its own.</text>
</comment>
<comment type="similarity">
    <text evidence="1">Belongs to the FKBP-type PPIase family. Tig subfamily.</text>
</comment>
<accession>A4F9F6</accession>
<sequence>MKSTVEHLSPTRVRINVEVPFDELKPNFDRAYKALAQQVRIPGFRPGKVPARVLESRIGRGPVLDEVVNESVPAKYLEAVNSSEVRTLGRPDIEVTKIEDGDVIEFKAEVDVRPEITVPAFGELKVSVDDVEVTEEEVNEQLDELRARFGTLAGVERPAQQGDFVSIDLSATVDGQEVEEAQTSGLSYEIGSGQLIDGIDEALIGASEGETRTFTTNLVAGEHAGKDAEVTVKLNSVKERHLPEVDDEFAQMASEFDSVDELLSDLRERLGRVKRMQQGMQARDKVLEALLETVEVPLPEKVVESEIDVRKHDAIHPFDHDEDRFGEWLEQQGQTREQFEDETREEAEKAVRTQLVLDTIADAEDVSVSDNELTERIIYQAQRFGVSPDQYVQQAQQSGQLGAIYADVRRSKALFSVVRQATVTDEEGNELDLDELFGTQAGEEQGEQAEGTEATDEQSAKADAKAE</sequence>
<gene>
    <name evidence="1" type="primary">tig</name>
    <name type="ordered locus">SACE_1359</name>
</gene>
<reference key="1">
    <citation type="journal article" date="2007" name="Nat. Biotechnol.">
        <title>Complete genome sequence of the erythromycin-producing bacterium Saccharopolyspora erythraea NRRL23338.</title>
        <authorList>
            <person name="Oliynyk M."/>
            <person name="Samborskyy M."/>
            <person name="Lester J.B."/>
            <person name="Mironenko T."/>
            <person name="Scott N."/>
            <person name="Dickens S."/>
            <person name="Haydock S.F."/>
            <person name="Leadlay P.F."/>
        </authorList>
    </citation>
    <scope>NUCLEOTIDE SEQUENCE [LARGE SCALE GENOMIC DNA]</scope>
    <source>
        <strain>ATCC 11635 / DSM 40517 / JCM 4748 / NBRC 13426 / NCIMB 8594 / NRRL 2338</strain>
    </source>
</reference>